<name>PRX8_PENRW</name>
<gene>
    <name evidence="8" type="primary">prx8</name>
    <name type="ORF">Pc12g06340</name>
    <name type="ORF">PCH_Pc12g06340</name>
</gene>
<feature type="chain" id="PRO_0000451223" description="Cytochrome P450 monooxygenase prx8">
    <location>
        <begin position="1"/>
        <end position="540"/>
    </location>
</feature>
<feature type="transmembrane region" description="Helical" evidence="5">
    <location>
        <begin position="50"/>
        <end position="68"/>
    </location>
</feature>
<feature type="binding site" description="axial binding residue" evidence="1">
    <location>
        <position position="483"/>
    </location>
    <ligand>
        <name>heme</name>
        <dbReference type="ChEBI" id="CHEBI:30413"/>
    </ligand>
    <ligandPart>
        <name>Fe</name>
        <dbReference type="ChEBI" id="CHEBI:18248"/>
    </ligandPart>
</feature>
<feature type="glycosylation site" description="N-linked (GlcNAc...) asparagine" evidence="6">
    <location>
        <position position="460"/>
    </location>
</feature>
<protein>
    <recommendedName>
        <fullName evidence="8">Cytochrome P450 monooxygenase prx8</fullName>
        <ecNumber evidence="10">1.-.-.-</ecNumber>
    </recommendedName>
    <alternativeName>
        <fullName evidence="8">PR-toxin biosynthesis cluster protein 8</fullName>
    </alternativeName>
</protein>
<keyword id="KW-0325">Glycoprotein</keyword>
<keyword id="KW-0349">Heme</keyword>
<keyword id="KW-0408">Iron</keyword>
<keyword id="KW-0472">Membrane</keyword>
<keyword id="KW-0479">Metal-binding</keyword>
<keyword id="KW-0503">Monooxygenase</keyword>
<keyword id="KW-0560">Oxidoreductase</keyword>
<keyword id="KW-1185">Reference proteome</keyword>
<keyword id="KW-0812">Transmembrane</keyword>
<keyword id="KW-1133">Transmembrane helix</keyword>
<evidence type="ECO:0000250" key="1">
    <source>
        <dbReference type="UniProtKB" id="P04798"/>
    </source>
</evidence>
<evidence type="ECO:0000250" key="2">
    <source>
        <dbReference type="UniProtKB" id="W6Q3Z9"/>
    </source>
</evidence>
<evidence type="ECO:0000250" key="3">
    <source>
        <dbReference type="UniProtKB" id="W6QB15"/>
    </source>
</evidence>
<evidence type="ECO:0000250" key="4">
    <source>
        <dbReference type="UniProtKB" id="W6QP10"/>
    </source>
</evidence>
<evidence type="ECO:0000255" key="5"/>
<evidence type="ECO:0000255" key="6">
    <source>
        <dbReference type="PROSITE-ProRule" id="PRU00498"/>
    </source>
</evidence>
<evidence type="ECO:0000269" key="7">
    <source>
    </source>
</evidence>
<evidence type="ECO:0000303" key="8">
    <source>
    </source>
</evidence>
<evidence type="ECO:0000305" key="9"/>
<evidence type="ECO:0000305" key="10">
    <source>
    </source>
</evidence>
<organism>
    <name type="scientific">Penicillium rubens (strain ATCC 28089 / DSM 1075 / NRRL 1951 / Wisconsin 54-1255)</name>
    <name type="common">Penicillium chrysogenum</name>
    <dbReference type="NCBI Taxonomy" id="500485"/>
    <lineage>
        <taxon>Eukaryota</taxon>
        <taxon>Fungi</taxon>
        <taxon>Dikarya</taxon>
        <taxon>Ascomycota</taxon>
        <taxon>Pezizomycotina</taxon>
        <taxon>Eurotiomycetes</taxon>
        <taxon>Eurotiomycetidae</taxon>
        <taxon>Eurotiales</taxon>
        <taxon>Aspergillaceae</taxon>
        <taxon>Penicillium</taxon>
        <taxon>Penicillium chrysogenum species complex</taxon>
    </lineage>
</organism>
<sequence length="540" mass="61316">MAVIFSSSALGSHTHVDRHLVRQPIRDLENNVDMLDHLSRVLALSSQYHALGAAIALFACACAYALVAPRQPPKFPAPQLYDETGPIDLIALDKTIKEGFQNYKGKYFTLKEAHGETVILPTKFMEELKALPDNMLNLDDEIDERFLSEYSLFTTTSVGGRISTVVNSIKNELTKTLGNLMGDIHEEVVYSFQELIPPCDDWTELDIQSKLVHIVALVSGRIFVGLPMSRNQEYLDCIIEFTLNVFFAVPEIRAYPRLLRWTSRYLNTKVRAVHKSLATMRRLMAPIIDDTKQQLEMGTGPHNMCAWNIKNSNQKERDSLNIQAQMQLATSMAAIHTTSMTVTNAIFDLAARPEYLQPLRDEFQDLRAIEPLPYLDKTSMPKLRKLDSFLKESHRLSPISLLNMRRKIVQPITLHDGTVLQPGMHIAFPLHQISNDEDLWENPSQFDGFRFQKLRDLPGNESKYQFTATGTNNLDFGHGVHACPGRFFAANEIKMILVHLIDNFDFKFKGDIGRPDSLWTPGGYHPDPSVRVLLKRRLKA</sequence>
<comment type="function">
    <text evidence="2 3 4 7">Cytochrome P450 monooxygenase; part of the gene cluster that mediates the biosynthesis of PR-toxin, a bicyclic sesquiterpene belonging to the eremophilane class and acting as a mycotoxin (PubMed:24239699). The first step of the pathway is catalyzed by the aristolochene synthase which performs the cyclization of trans,trans-farnesyl diphosphate (FPP) to the bicyclic sesquiterpene aristolochene (PubMed:24239699). Following the formation of aristolochene, the non-oxygenated aristolochene is converted to the trioxygenated intermediate eremofortin B, via 7-epi-neopetasone (PubMed:24239699). This conversion appears to involve three enzymes, a hydroxysterol oxidase-like enzyme, the quinone-oxidase prx3 that forms the quinone-type-structure in the bicyclic nucleus of aristolochene with the C8-oxo group and the C-3 hydroxyl group, and the P450 monooxygenase prx9 that introduces the epoxide at the double bond between carbons 1 and 2 (By similarity) (PubMed:24239699). No monoxy or dioxy-intermediates have been reported to be released to the broth, so these three early oxidative reactions may be coupled together (PubMed:24239699). Eremofortin B is further oxidized by another P450 monooxygenase, that introduces a second epoxide between carbons 7 and 11 prior to acetylation to eremofortin A by the acetyltransferase prx11 (By similarity). The second epoxidation may be performed by a second P450 monooxygenase (PubMed:24239699). After the acetylation step, eremofortin A is converted to eremofortin C and then to PR-toxin (PubMed:24239699). First the conversion of eremofortin A to eremofortin C proceeds by oxidation of the side chain of the molecule at C-12 and is catalyzed by the short-chain oxidoreductase prx1 (PubMed:24239699). The cytochrome P450 monooxygenase prx8 also plays a role in this step (By similarity). The primary alcohol formed at C-12 is finally oxidized by the short-chain alcohol dehydrogenase prx4 that forms PR-toxin (PubMed:24239699).</text>
</comment>
<comment type="cofactor">
    <cofactor evidence="1">
        <name>heme</name>
        <dbReference type="ChEBI" id="CHEBI:30413"/>
    </cofactor>
</comment>
<comment type="pathway">
    <text evidence="10">Sesquiterpene biosynthesis.</text>
</comment>
<comment type="subcellular location">
    <subcellularLocation>
        <location evidence="5">Membrane</location>
        <topology evidence="5">Single-pass membrane protein</topology>
    </subcellularLocation>
</comment>
<comment type="induction">
    <text evidence="7">Expression and the subsequent production of PR-toxin take place under static culture conditions (oxygen limited), whereas no expression of the PR-toxin genes occurs under the strongly aerated conditions required for optimal penicillin production (PubMed:24239699). There is a negative control of the transcription of the PR-toxin genes by the penicillin biosynthesis gene product(s), or by a regulatory peptide encoded by a small ORF inside the penicillin gene cluster (PubMed:24239699).</text>
</comment>
<comment type="similarity">
    <text evidence="9">Belongs to the cytochrome P450 family.</text>
</comment>
<proteinExistence type="evidence at transcript level"/>
<dbReference type="EC" id="1.-.-.-" evidence="10"/>
<dbReference type="EMBL" id="AM920427">
    <property type="protein sequence ID" value="CAP80261.1"/>
    <property type="molecule type" value="Genomic_DNA"/>
</dbReference>
<dbReference type="RefSeq" id="XP_002557476.1">
    <property type="nucleotide sequence ID" value="XM_002557430.1"/>
</dbReference>
<dbReference type="SMR" id="B6H066"/>
<dbReference type="GlyCosmos" id="B6H066">
    <property type="glycosylation" value="1 site, No reported glycans"/>
</dbReference>
<dbReference type="GeneID" id="8313020"/>
<dbReference type="KEGG" id="pcs:N7525_001917"/>
<dbReference type="VEuPathDB" id="FungiDB:PCH_Pc12g06340"/>
<dbReference type="eggNOG" id="KOG0158">
    <property type="taxonomic scope" value="Eukaryota"/>
</dbReference>
<dbReference type="HOGENOM" id="CLU_022195_0_2_1"/>
<dbReference type="OMA" id="MHIAFPL"/>
<dbReference type="OrthoDB" id="1844152at2759"/>
<dbReference type="BioCyc" id="PCHR:PC12G06340-MONOMER"/>
<dbReference type="Proteomes" id="UP000000724">
    <property type="component" value="Contig Pc00c12"/>
</dbReference>
<dbReference type="GO" id="GO:0016020">
    <property type="term" value="C:membrane"/>
    <property type="evidence" value="ECO:0007669"/>
    <property type="project" value="UniProtKB-SubCell"/>
</dbReference>
<dbReference type="GO" id="GO:0020037">
    <property type="term" value="F:heme binding"/>
    <property type="evidence" value="ECO:0007669"/>
    <property type="project" value="InterPro"/>
</dbReference>
<dbReference type="GO" id="GO:0005506">
    <property type="term" value="F:iron ion binding"/>
    <property type="evidence" value="ECO:0007669"/>
    <property type="project" value="InterPro"/>
</dbReference>
<dbReference type="GO" id="GO:0004497">
    <property type="term" value="F:monooxygenase activity"/>
    <property type="evidence" value="ECO:0007669"/>
    <property type="project" value="UniProtKB-KW"/>
</dbReference>
<dbReference type="GO" id="GO:0016705">
    <property type="term" value="F:oxidoreductase activity, acting on paired donors, with incorporation or reduction of molecular oxygen"/>
    <property type="evidence" value="ECO:0007669"/>
    <property type="project" value="InterPro"/>
</dbReference>
<dbReference type="GO" id="GO:0043386">
    <property type="term" value="P:mycotoxin biosynthetic process"/>
    <property type="evidence" value="ECO:0007669"/>
    <property type="project" value="UniProtKB-ARBA"/>
</dbReference>
<dbReference type="CDD" id="cd11041">
    <property type="entry name" value="CYP503A1-like"/>
    <property type="match status" value="1"/>
</dbReference>
<dbReference type="Gene3D" id="1.10.630.10">
    <property type="entry name" value="Cytochrome P450"/>
    <property type="match status" value="1"/>
</dbReference>
<dbReference type="InterPro" id="IPR001128">
    <property type="entry name" value="Cyt_P450"/>
</dbReference>
<dbReference type="InterPro" id="IPR017972">
    <property type="entry name" value="Cyt_P450_CS"/>
</dbReference>
<dbReference type="InterPro" id="IPR002403">
    <property type="entry name" value="Cyt_P450_E_grp-IV"/>
</dbReference>
<dbReference type="InterPro" id="IPR036396">
    <property type="entry name" value="Cyt_P450_sf"/>
</dbReference>
<dbReference type="PANTHER" id="PTHR46206">
    <property type="entry name" value="CYTOCHROME P450"/>
    <property type="match status" value="1"/>
</dbReference>
<dbReference type="PANTHER" id="PTHR46206:SF6">
    <property type="entry name" value="CYTOCHROME P450 MONOOXYGENASE AN1598-RELATED"/>
    <property type="match status" value="1"/>
</dbReference>
<dbReference type="Pfam" id="PF00067">
    <property type="entry name" value="p450"/>
    <property type="match status" value="1"/>
</dbReference>
<dbReference type="PRINTS" id="PR00465">
    <property type="entry name" value="EP450IV"/>
</dbReference>
<dbReference type="SUPFAM" id="SSF48264">
    <property type="entry name" value="Cytochrome P450"/>
    <property type="match status" value="1"/>
</dbReference>
<dbReference type="PROSITE" id="PS00086">
    <property type="entry name" value="CYTOCHROME_P450"/>
    <property type="match status" value="1"/>
</dbReference>
<accession>B6H066</accession>
<reference key="1">
    <citation type="journal article" date="2008" name="Nat. Biotechnol.">
        <title>Genome sequencing and analysis of the filamentous fungus Penicillium chrysogenum.</title>
        <authorList>
            <person name="van den Berg M.A."/>
            <person name="Albang R."/>
            <person name="Albermann K."/>
            <person name="Badger J.H."/>
            <person name="Daran J.-M."/>
            <person name="Driessen A.J.M."/>
            <person name="Garcia-Estrada C."/>
            <person name="Fedorova N.D."/>
            <person name="Harris D.M."/>
            <person name="Heijne W.H.M."/>
            <person name="Joardar V.S."/>
            <person name="Kiel J.A.K.W."/>
            <person name="Kovalchuk A."/>
            <person name="Martin J.F."/>
            <person name="Nierman W.C."/>
            <person name="Nijland J.G."/>
            <person name="Pronk J.T."/>
            <person name="Roubos J.A."/>
            <person name="van der Klei I.J."/>
            <person name="van Peij N.N.M.E."/>
            <person name="Veenhuis M."/>
            <person name="von Doehren H."/>
            <person name="Wagner C."/>
            <person name="Wortman J.R."/>
            <person name="Bovenberg R.A.L."/>
        </authorList>
    </citation>
    <scope>NUCLEOTIDE SEQUENCE [LARGE SCALE GENOMIC DNA]</scope>
    <source>
        <strain>ATCC 28089 / DSM 1075 / NRRL 1951 / Wisconsin 54-1255</strain>
    </source>
</reference>
<reference key="2">
    <citation type="journal article" date="2014" name="Fungal Genet. Biol.">
        <title>Molecular characterization of the PR-toxin gene cluster in Penicillium roqueforti and Penicillium chrysogenum: cross talk of secondary metabolite pathways.</title>
        <authorList>
            <person name="Hidalgo P.I."/>
            <person name="Ullan R.V."/>
            <person name="Albillos S.M."/>
            <person name="Montero O."/>
            <person name="Fernandez-Bodega M.A."/>
            <person name="Garcia-Estrada C."/>
            <person name="Fernandez-Aguado M."/>
            <person name="Martin J.F."/>
        </authorList>
    </citation>
    <scope>FUNCTION</scope>
    <scope>INDUCTION</scope>
    <scope>PATHWAY</scope>
</reference>